<proteinExistence type="evidence at protein level"/>
<accession>Q6F5E6</accession>
<sequence length="343" mass="39009">MAYTVEPREHSKNTTLPTVAMPPSPPSSFSASFGPFRYDTKEVNFDHWTSTKEKVVTGPYDYIAAKPGKEVRTLLLACFDEWLQVPPESLEVIGQVVRMLHTASLLIDDIQDNSELRRGKPVAQNIFGTALTINSANYVYFLALEKLNSLKNPNITDIFTEELLRLHRGQAMDLYWRDTLTCPTEEEYFEMVANMTGGLFWLMYRMMNAESSMPIDLLPVVELLGVIFQVLDDYKNLCSREYGKLKGFGEDLTEGKFSFPVIHSIRSNPEDLQLLHVLQQKSSNEHVKLYAIEIMESTGSLEYTKHVVENIVSQIQEIIYSTDEGQGRGKGILDLLHKITRLS</sequence>
<dbReference type="EC" id="2.5.1.-" evidence="5"/>
<dbReference type="EC" id="2.5.1.1" evidence="1"/>
<dbReference type="EC" id="2.5.1.29" evidence="1"/>
<dbReference type="EC" id="2.5.1.10" evidence="1"/>
<dbReference type="EMBL" id="AB114137">
    <property type="protein sequence ID" value="BAD29970.1"/>
    <property type="molecule type" value="Genomic_DNA"/>
</dbReference>
<dbReference type="SMR" id="Q6F5E6"/>
<dbReference type="GO" id="GO:0004337">
    <property type="term" value="F:(2E,6E)-farnesyl diphosphate synthase activity"/>
    <property type="evidence" value="ECO:0007669"/>
    <property type="project" value="UniProtKB-EC"/>
</dbReference>
<dbReference type="GO" id="GO:0004161">
    <property type="term" value="F:dimethylallyltranstransferase activity"/>
    <property type="evidence" value="ECO:0007669"/>
    <property type="project" value="UniProtKB-EC"/>
</dbReference>
<dbReference type="GO" id="GO:0004311">
    <property type="term" value="F:geranylgeranyl diphosphate synthase activity"/>
    <property type="evidence" value="ECO:0007669"/>
    <property type="project" value="UniProtKB-EC"/>
</dbReference>
<dbReference type="GO" id="GO:0046872">
    <property type="term" value="F:metal ion binding"/>
    <property type="evidence" value="ECO:0007669"/>
    <property type="project" value="UniProtKB-KW"/>
</dbReference>
<dbReference type="GO" id="GO:0046165">
    <property type="term" value="P:alcohol biosynthetic process"/>
    <property type="evidence" value="ECO:0007669"/>
    <property type="project" value="UniProtKB-ARBA"/>
</dbReference>
<dbReference type="GO" id="GO:0008299">
    <property type="term" value="P:isoprenoid biosynthetic process"/>
    <property type="evidence" value="ECO:0007669"/>
    <property type="project" value="InterPro"/>
</dbReference>
<dbReference type="GO" id="GO:0043386">
    <property type="term" value="P:mycotoxin biosynthetic process"/>
    <property type="evidence" value="ECO:0007669"/>
    <property type="project" value="UniProtKB-ARBA"/>
</dbReference>
<dbReference type="CDD" id="cd00685">
    <property type="entry name" value="Trans_IPPS_HT"/>
    <property type="match status" value="1"/>
</dbReference>
<dbReference type="Gene3D" id="1.10.600.10">
    <property type="entry name" value="Farnesyl Diphosphate Synthase"/>
    <property type="match status" value="1"/>
</dbReference>
<dbReference type="InterPro" id="IPR008949">
    <property type="entry name" value="Isoprenoid_synthase_dom_sf"/>
</dbReference>
<dbReference type="InterPro" id="IPR000092">
    <property type="entry name" value="Polyprenyl_synt"/>
</dbReference>
<dbReference type="InterPro" id="IPR033749">
    <property type="entry name" value="Polyprenyl_synt_CS"/>
</dbReference>
<dbReference type="PANTHER" id="PTHR12001">
    <property type="entry name" value="GERANYLGERANYL PYROPHOSPHATE SYNTHASE"/>
    <property type="match status" value="1"/>
</dbReference>
<dbReference type="PANTHER" id="PTHR12001:SF44">
    <property type="entry name" value="GERANYLGERANYL PYROPHOSPHATE SYNTHASE"/>
    <property type="match status" value="1"/>
</dbReference>
<dbReference type="Pfam" id="PF00348">
    <property type="entry name" value="polyprenyl_synt"/>
    <property type="match status" value="1"/>
</dbReference>
<dbReference type="SFLD" id="SFLDS00005">
    <property type="entry name" value="Isoprenoid_Synthase_Type_I"/>
    <property type="match status" value="1"/>
</dbReference>
<dbReference type="SUPFAM" id="SSF48576">
    <property type="entry name" value="Terpenoid synthases"/>
    <property type="match status" value="1"/>
</dbReference>
<dbReference type="PROSITE" id="PS00723">
    <property type="entry name" value="POLYPRENYL_SYNTHASE_1"/>
    <property type="match status" value="1"/>
</dbReference>
<dbReference type="PROSITE" id="PS00444">
    <property type="entry name" value="POLYPRENYL_SYNTHASE_2"/>
    <property type="match status" value="1"/>
</dbReference>
<protein>
    <recommendedName>
        <fullName evidence="1">Geranylgeranyl pyrophosphate synthase</fullName>
        <shortName evidence="7">GGPP synthase</shortName>
        <shortName evidence="7">GGPPSase</shortName>
        <ecNumber evidence="5">2.5.1.-</ecNumber>
    </recommendedName>
    <alternativeName>
        <fullName evidence="1">(2E,6E)-farnesyl diphosphate synthase</fullName>
    </alternativeName>
    <alternativeName>
        <fullName evidence="1">Dimethylallyltranstransferase</fullName>
        <ecNumber evidence="1">2.5.1.1</ecNumber>
    </alternativeName>
    <alternativeName>
        <fullName evidence="1">Farnesyl diphosphate synthase</fullName>
    </alternativeName>
    <alternativeName>
        <fullName evidence="1">Farnesyltranstransferase</fullName>
        <ecNumber evidence="1">2.5.1.29</ecNumber>
    </alternativeName>
    <alternativeName>
        <fullName evidence="6">Geranylgeranyl diphosphate synthase</fullName>
    </alternativeName>
    <alternativeName>
        <fullName evidence="1">Geranyltranstransferase</fullName>
        <ecNumber evidence="1">2.5.1.10</ecNumber>
    </alternativeName>
</protein>
<comment type="function">
    <text evidence="3 4 5">Geranylgeranyl pyrophosphate synthase; part of the gene cluster that mediates the biosynthesis of aphidicolin, a specific inhibitor of eukaryotic DNA synthesis and DNA polymerase alpha (PubMed:14745177, PubMed:21897020). The geranylgeranyl pyrophosphate synthase GGS is required for supplying a sufficient amount of geranylgeranyl diphosphate (GGDP), the general precursor of diterpenes (PubMed:21897020). The diterpene synthase ACS then catalyzes the conversion of geranylgeranyl diphosphate to aphidicolan-16-beta-ol via the intermediate syn-copalyldiphosphate (syn-CDP) (PubMed:11457369, PubMed:21897020). In addition to aphidicolan-16-beta-ol, the enzyme also produces low levels of amphidicol-15-ene and amphidicol-16-ene (PubMed:11457369). The cytochrome P450 monooxygenase P450-2 then catalyzes the two-step hydroxylation from aphidicolan-16-beta-ol to 3-deoxyaphidicolin via a 17,3-deoxyaphidicolin intermediate (PubMed:21897020). Finally, the cytochrome P450 monooxygenase P450-1 converts 3-deoxyaphidicolin to aphidicolin (PubMed:21897020).</text>
</comment>
<comment type="catalytic activity">
    <reaction evidence="1">
        <text>isopentenyl diphosphate + dimethylallyl diphosphate = (2E)-geranyl diphosphate + diphosphate</text>
        <dbReference type="Rhea" id="RHEA:22408"/>
        <dbReference type="ChEBI" id="CHEBI:33019"/>
        <dbReference type="ChEBI" id="CHEBI:57623"/>
        <dbReference type="ChEBI" id="CHEBI:58057"/>
        <dbReference type="ChEBI" id="CHEBI:128769"/>
        <dbReference type="EC" id="2.5.1.1"/>
    </reaction>
</comment>
<comment type="catalytic activity">
    <reaction evidence="1">
        <text>isopentenyl diphosphate + (2E)-geranyl diphosphate = (2E,6E)-farnesyl diphosphate + diphosphate</text>
        <dbReference type="Rhea" id="RHEA:19361"/>
        <dbReference type="ChEBI" id="CHEBI:33019"/>
        <dbReference type="ChEBI" id="CHEBI:58057"/>
        <dbReference type="ChEBI" id="CHEBI:128769"/>
        <dbReference type="ChEBI" id="CHEBI:175763"/>
        <dbReference type="EC" id="2.5.1.10"/>
    </reaction>
</comment>
<comment type="catalytic activity">
    <reaction evidence="1">
        <text>isopentenyl diphosphate + (2E,6E)-farnesyl diphosphate = (2E,6E,10E)-geranylgeranyl diphosphate + diphosphate</text>
        <dbReference type="Rhea" id="RHEA:17653"/>
        <dbReference type="ChEBI" id="CHEBI:33019"/>
        <dbReference type="ChEBI" id="CHEBI:58756"/>
        <dbReference type="ChEBI" id="CHEBI:128769"/>
        <dbReference type="ChEBI" id="CHEBI:175763"/>
        <dbReference type="EC" id="2.5.1.29"/>
    </reaction>
</comment>
<comment type="cofactor">
    <cofactor evidence="1">
        <name>Mg(2+)</name>
        <dbReference type="ChEBI" id="CHEBI:18420"/>
    </cofactor>
    <text evidence="1">Binds 3 Mg(2+) ions per subunit.</text>
</comment>
<comment type="pathway">
    <text evidence="5">Mycotoxin biosynthesis.</text>
</comment>
<comment type="similarity">
    <text evidence="7">Belongs to the FPP/GGPP synthase family.</text>
</comment>
<reference key="1">
    <citation type="journal article" date="2004" name="Biosci. Biotechnol. Biochem.">
        <title>Cloning of a gene cluster responsible for the biosynthesis of diterpene aphidicolin, a specific inhibitor of DNA polymerase alpha.</title>
        <authorList>
            <person name="Toyomasu T."/>
            <person name="Nakaminami K."/>
            <person name="Toshima H."/>
            <person name="Mie T."/>
            <person name="Watanabe K."/>
            <person name="Ito H."/>
            <person name="Matsui H."/>
            <person name="Mitsuhashi W."/>
            <person name="Sassa T."/>
            <person name="Oikawa H."/>
        </authorList>
    </citation>
    <scope>NUCLEOTIDE SEQUENCE [GENOMIC DNA]</scope>
    <scope>IDENTIFICATION OF GENE CLUSTER</scope>
    <source>
        <strain>PS-16</strain>
    </source>
</reference>
<reference key="2">
    <citation type="journal article" date="2001" name="J. Am. Chem. Soc.">
        <title>Cloning and functional expression of cDNA encoding aphidicolan-16 beta-ol synthase: a key enzyme responsible for formation of an unusual diterpene skeleton in biosynthesis of aphidicolin.</title>
        <authorList>
            <person name="Oikawa H."/>
            <person name="Toyomasu T."/>
            <person name="Toshima H."/>
            <person name="Ohashi S."/>
            <person name="Kawaide H."/>
            <person name="Kamiya Y."/>
            <person name="Ohtsuka M."/>
            <person name="Shinoda S."/>
            <person name="Mitsuhashi W."/>
            <person name="Sassa T."/>
        </authorList>
    </citation>
    <scope>FUNCTION</scope>
</reference>
<reference key="3">
    <citation type="journal article" date="2011" name="Biosci. Biotechnol. Biochem.">
        <title>Total biosynthesis of diterpene aphidicolin, a specific inhibitor of DNA polymerase alpha: heterologous expression of four biosynthetic genes in Aspergillus oryzae.</title>
        <authorList>
            <person name="Fujii R."/>
            <person name="Minami A."/>
            <person name="Tsukagoshi T."/>
            <person name="Sato N."/>
            <person name="Sahara T."/>
            <person name="Ohgiya S."/>
            <person name="Gomi K."/>
            <person name="Oikawa H."/>
        </authorList>
    </citation>
    <scope>FUNCTION</scope>
    <scope>CATALYTIC ACTIVITY</scope>
    <scope>PATHWAY</scope>
</reference>
<name>GGS_NEOBT</name>
<keyword id="KW-0460">Magnesium</keyword>
<keyword id="KW-0479">Metal-binding</keyword>
<keyword id="KW-0808">Transferase</keyword>
<feature type="chain" id="PRO_0000438560" description="Geranylgeranyl pyrophosphate synthase">
    <location>
        <begin position="1"/>
        <end position="343"/>
    </location>
</feature>
<feature type="region of interest" description="Disordered" evidence="2">
    <location>
        <begin position="1"/>
        <end position="26"/>
    </location>
</feature>
<feature type="compositionally biased region" description="Basic and acidic residues" evidence="2">
    <location>
        <begin position="1"/>
        <end position="12"/>
    </location>
</feature>
<feature type="binding site" evidence="1">
    <location>
        <position position="69"/>
    </location>
    <ligand>
        <name>isopentenyl diphosphate</name>
        <dbReference type="ChEBI" id="CHEBI:128769"/>
    </ligand>
</feature>
<feature type="binding site" evidence="1">
    <location>
        <position position="72"/>
    </location>
    <ligand>
        <name>isopentenyl diphosphate</name>
        <dbReference type="ChEBI" id="CHEBI:128769"/>
    </ligand>
</feature>
<feature type="binding site" evidence="1">
    <location>
        <position position="101"/>
    </location>
    <ligand>
        <name>isopentenyl diphosphate</name>
        <dbReference type="ChEBI" id="CHEBI:128769"/>
    </ligand>
</feature>
<feature type="binding site" evidence="1">
    <location>
        <position position="108"/>
    </location>
    <ligand>
        <name>Mg(2+)</name>
        <dbReference type="ChEBI" id="CHEBI:18420"/>
        <label>1</label>
    </ligand>
</feature>
<feature type="binding site" evidence="1">
    <location>
        <position position="108"/>
    </location>
    <ligand>
        <name>Mg(2+)</name>
        <dbReference type="ChEBI" id="CHEBI:18420"/>
        <label>2</label>
    </ligand>
</feature>
<feature type="binding site" evidence="1">
    <location>
        <position position="112"/>
    </location>
    <ligand>
        <name>Mg(2+)</name>
        <dbReference type="ChEBI" id="CHEBI:18420"/>
        <label>1</label>
    </ligand>
</feature>
<feature type="binding site" evidence="1">
    <location>
        <position position="112"/>
    </location>
    <ligand>
        <name>Mg(2+)</name>
        <dbReference type="ChEBI" id="CHEBI:18420"/>
        <label>2</label>
    </ligand>
</feature>
<feature type="binding site" evidence="1">
    <location>
        <position position="117"/>
    </location>
    <ligand>
        <name>dimethylallyl diphosphate</name>
        <dbReference type="ChEBI" id="CHEBI:57623"/>
    </ligand>
</feature>
<feature type="binding site" evidence="1">
    <location>
        <position position="118"/>
    </location>
    <ligand>
        <name>isopentenyl diphosphate</name>
        <dbReference type="ChEBI" id="CHEBI:128769"/>
    </ligand>
</feature>
<feature type="binding site" evidence="1">
    <location>
        <position position="196"/>
    </location>
    <ligand>
        <name>dimethylallyl diphosphate</name>
        <dbReference type="ChEBI" id="CHEBI:57623"/>
    </ligand>
</feature>
<feature type="binding site" evidence="1">
    <location>
        <position position="229"/>
    </location>
    <ligand>
        <name>dimethylallyl diphosphate</name>
        <dbReference type="ChEBI" id="CHEBI:57623"/>
    </ligand>
</feature>
<feature type="binding site" evidence="1">
    <location>
        <position position="232"/>
    </location>
    <ligand>
        <name>Mg(2+)</name>
        <dbReference type="ChEBI" id="CHEBI:18420"/>
        <label>3</label>
    </ligand>
</feature>
<feature type="binding site" evidence="1">
    <location>
        <position position="236"/>
    </location>
    <ligand>
        <name>dimethylallyl diphosphate</name>
        <dbReference type="ChEBI" id="CHEBI:57623"/>
    </ligand>
</feature>
<feature type="binding site" evidence="1">
    <location>
        <position position="246"/>
    </location>
    <ligand>
        <name>dimethylallyl diphosphate</name>
        <dbReference type="ChEBI" id="CHEBI:57623"/>
    </ligand>
</feature>
<feature type="binding site" evidence="1">
    <location>
        <position position="256"/>
    </location>
    <ligand>
        <name>dimethylallyl diphosphate</name>
        <dbReference type="ChEBI" id="CHEBI:57623"/>
    </ligand>
</feature>
<feature type="site" description="Important for determining product chain length" evidence="1">
    <location>
        <position position="140"/>
    </location>
</feature>
<organism>
    <name type="scientific">Neocamarosporium betae</name>
    <name type="common">Beet black rot fungus</name>
    <name type="synonym">Pleospora betae</name>
    <dbReference type="NCBI Taxonomy" id="1979465"/>
    <lineage>
        <taxon>Eukaryota</taxon>
        <taxon>Fungi</taxon>
        <taxon>Dikarya</taxon>
        <taxon>Ascomycota</taxon>
        <taxon>Pezizomycotina</taxon>
        <taxon>Dothideomycetes</taxon>
        <taxon>Pleosporomycetidae</taxon>
        <taxon>Pleosporales</taxon>
        <taxon>Pleosporineae</taxon>
        <taxon>Pleosporaceae</taxon>
        <taxon>Neocamarosporium</taxon>
    </lineage>
</organism>
<gene>
    <name type="primary">GGS</name>
</gene>
<evidence type="ECO:0000250" key="1">
    <source>
        <dbReference type="UniProtKB" id="Q12051"/>
    </source>
</evidence>
<evidence type="ECO:0000256" key="2">
    <source>
        <dbReference type="SAM" id="MobiDB-lite"/>
    </source>
</evidence>
<evidence type="ECO:0000269" key="3">
    <source>
    </source>
</evidence>
<evidence type="ECO:0000269" key="4">
    <source>
    </source>
</evidence>
<evidence type="ECO:0000269" key="5">
    <source>
    </source>
</evidence>
<evidence type="ECO:0000303" key="6">
    <source>
    </source>
</evidence>
<evidence type="ECO:0000305" key="7"/>